<accession>Q11071</accession>
<sequence>MNEDNHESSSSGCDNQIEFLVSEAEQRRRRVNHLDTEVHGLGYDPFSYCGRRVHVLLLTKLISVLTIPFYVAIIIFISFFGNATSVMFSVIILGSVLISTCYGAFRGAKMCLIPFVIIQLVFLIYDLILITILLLAVVFPKMFLSALLRLPLEDIPFGTDQVLLGCSLLLALLLAPLVWTTHVVYIDFLFISQVDETLHMLKEANQKVSQDDVSPNRMMF</sequence>
<keyword id="KW-0472">Membrane</keyword>
<keyword id="KW-1185">Reference proteome</keyword>
<keyword id="KW-0812">Transmembrane</keyword>
<keyword id="KW-1133">Transmembrane helix</keyword>
<gene>
    <name evidence="3" type="ORF">B0416.3</name>
</gene>
<protein>
    <recommendedName>
        <fullName>Uncharacterized protein B0416.3</fullName>
    </recommendedName>
</protein>
<proteinExistence type="predicted"/>
<comment type="subcellular location">
    <subcellularLocation>
        <location evidence="2">Membrane</location>
        <topology evidence="2">Multi-pass membrane protein</topology>
    </subcellularLocation>
</comment>
<name>YT43_CAEEL</name>
<organism>
    <name type="scientific">Caenorhabditis elegans</name>
    <dbReference type="NCBI Taxonomy" id="6239"/>
    <lineage>
        <taxon>Eukaryota</taxon>
        <taxon>Metazoa</taxon>
        <taxon>Ecdysozoa</taxon>
        <taxon>Nematoda</taxon>
        <taxon>Chromadorea</taxon>
        <taxon>Rhabditida</taxon>
        <taxon>Rhabditina</taxon>
        <taxon>Rhabditomorpha</taxon>
        <taxon>Rhabditoidea</taxon>
        <taxon>Rhabditidae</taxon>
        <taxon>Peloderinae</taxon>
        <taxon>Caenorhabditis</taxon>
    </lineage>
</organism>
<feature type="chain" id="PRO_0000065080" description="Uncharacterized protein B0416.3">
    <location>
        <begin position="1"/>
        <end position="220"/>
    </location>
</feature>
<feature type="transmembrane region" description="Helical" evidence="1">
    <location>
        <begin position="61"/>
        <end position="81"/>
    </location>
</feature>
<feature type="transmembrane region" description="Helical" evidence="1">
    <location>
        <begin position="85"/>
        <end position="105"/>
    </location>
</feature>
<feature type="transmembrane region" description="Helical" evidence="1">
    <location>
        <begin position="115"/>
        <end position="135"/>
    </location>
</feature>
<feature type="transmembrane region" description="Helical" evidence="1">
    <location>
        <begin position="150"/>
        <end position="170"/>
    </location>
</feature>
<reference key="1">
    <citation type="journal article" date="1998" name="Science">
        <title>Genome sequence of the nematode C. elegans: a platform for investigating biology.</title>
        <authorList>
            <consortium name="The C. elegans sequencing consortium"/>
        </authorList>
    </citation>
    <scope>NUCLEOTIDE SEQUENCE [LARGE SCALE GENOMIC DNA]</scope>
    <source>
        <strain>Bristol N2</strain>
    </source>
</reference>
<evidence type="ECO:0000255" key="1"/>
<evidence type="ECO:0000305" key="2"/>
<evidence type="ECO:0000312" key="3">
    <source>
        <dbReference type="WormBase" id="B0416.3"/>
    </source>
</evidence>
<dbReference type="EMBL" id="BX284606">
    <property type="protein sequence ID" value="CCD61921.2"/>
    <property type="molecule type" value="Genomic_DNA"/>
</dbReference>
<dbReference type="PIR" id="D89606">
    <property type="entry name" value="D89606"/>
</dbReference>
<dbReference type="RefSeq" id="NP_001359803.1">
    <property type="nucleotide sequence ID" value="NM_001373416.3"/>
</dbReference>
<dbReference type="RefSeq" id="NP_509565.1">
    <property type="nucleotide sequence ID" value="NM_077164.3"/>
</dbReference>
<dbReference type="FunCoup" id="Q11071">
    <property type="interactions" value="387"/>
</dbReference>
<dbReference type="PaxDb" id="6239-B0416.3"/>
<dbReference type="EnsemblMetazoa" id="B0416.3.1">
    <property type="protein sequence ID" value="B0416.3.1"/>
    <property type="gene ID" value="WBGene00015179"/>
</dbReference>
<dbReference type="GeneID" id="181159"/>
<dbReference type="UCSC" id="B0416.3">
    <property type="organism name" value="c. elegans"/>
</dbReference>
<dbReference type="AGR" id="WB:WBGene00015179"/>
<dbReference type="WormBase" id="B0416.3">
    <property type="protein sequence ID" value="CE53286"/>
    <property type="gene ID" value="WBGene00015179"/>
</dbReference>
<dbReference type="eggNOG" id="ENOG502QRB1">
    <property type="taxonomic scope" value="Eukaryota"/>
</dbReference>
<dbReference type="HOGENOM" id="CLU_1220640_0_0_1"/>
<dbReference type="InParanoid" id="Q11071"/>
<dbReference type="OrthoDB" id="5874973at2759"/>
<dbReference type="PRO" id="PR:Q11071"/>
<dbReference type="Proteomes" id="UP000001940">
    <property type="component" value="Chromosome X"/>
</dbReference>
<dbReference type="Bgee" id="WBGene00015179">
    <property type="expression patterns" value="Expressed in larva and 3 other cell types or tissues"/>
</dbReference>
<dbReference type="GO" id="GO:0016020">
    <property type="term" value="C:membrane"/>
    <property type="evidence" value="ECO:0007669"/>
    <property type="project" value="UniProtKB-SubCell"/>
</dbReference>